<keyword id="KW-0066">ATP synthesis</keyword>
<keyword id="KW-1003">Cell membrane</keyword>
<keyword id="KW-0375">Hydrogen ion transport</keyword>
<keyword id="KW-0406">Ion transport</keyword>
<keyword id="KW-0472">Membrane</keyword>
<keyword id="KW-1185">Reference proteome</keyword>
<keyword id="KW-0813">Transport</keyword>
<feature type="chain" id="PRO_1000132896" description="A-type ATP synthase subunit E">
    <location>
        <begin position="1"/>
        <end position="192"/>
    </location>
</feature>
<sequence>MSLDTVVEDVRDEARARAEDIREAAESEADEIVAEAEADAERIREERLAEVDRQIDQEREQTLSSAKLEAKQERLGARRDVLEDVYDDVEAAIEGLDGDRRRELTETLLDATLAEFDDDEDVAVYTHTEDVDLVEELVEDRNAVVDGEIDCLGGVVAESDTSRVRVNNTFDSILESVWDDELKNISERLFDQ</sequence>
<accession>B9LS38</accession>
<organism>
    <name type="scientific">Halorubrum lacusprofundi (strain ATCC 49239 / DSM 5036 / JCM 8891 / ACAM 34)</name>
    <dbReference type="NCBI Taxonomy" id="416348"/>
    <lineage>
        <taxon>Archaea</taxon>
        <taxon>Methanobacteriati</taxon>
        <taxon>Methanobacteriota</taxon>
        <taxon>Stenosarchaea group</taxon>
        <taxon>Halobacteria</taxon>
        <taxon>Halobacteriales</taxon>
        <taxon>Haloferacaceae</taxon>
        <taxon>Halorubrum</taxon>
    </lineage>
</organism>
<dbReference type="EMBL" id="CP001365">
    <property type="protein sequence ID" value="ACM55883.1"/>
    <property type="molecule type" value="Genomic_DNA"/>
</dbReference>
<dbReference type="RefSeq" id="WP_012659524.1">
    <property type="nucleotide sequence ID" value="NC_012029.1"/>
</dbReference>
<dbReference type="SMR" id="B9LS38"/>
<dbReference type="GeneID" id="7401204"/>
<dbReference type="KEGG" id="hla:Hlac_0278"/>
<dbReference type="eggNOG" id="arCOG00869">
    <property type="taxonomic scope" value="Archaea"/>
</dbReference>
<dbReference type="HOGENOM" id="CLU_120786_0_0_2"/>
<dbReference type="Proteomes" id="UP000000740">
    <property type="component" value="Chromosome 1"/>
</dbReference>
<dbReference type="GO" id="GO:0005886">
    <property type="term" value="C:plasma membrane"/>
    <property type="evidence" value="ECO:0007669"/>
    <property type="project" value="UniProtKB-SubCell"/>
</dbReference>
<dbReference type="GO" id="GO:0033178">
    <property type="term" value="C:proton-transporting two-sector ATPase complex, catalytic domain"/>
    <property type="evidence" value="ECO:0007669"/>
    <property type="project" value="InterPro"/>
</dbReference>
<dbReference type="GO" id="GO:0005524">
    <property type="term" value="F:ATP binding"/>
    <property type="evidence" value="ECO:0007669"/>
    <property type="project" value="UniProtKB-UniRule"/>
</dbReference>
<dbReference type="GO" id="GO:0046933">
    <property type="term" value="F:proton-transporting ATP synthase activity, rotational mechanism"/>
    <property type="evidence" value="ECO:0007669"/>
    <property type="project" value="UniProtKB-UniRule"/>
</dbReference>
<dbReference type="GO" id="GO:0046961">
    <property type="term" value="F:proton-transporting ATPase activity, rotational mechanism"/>
    <property type="evidence" value="ECO:0007669"/>
    <property type="project" value="InterPro"/>
</dbReference>
<dbReference type="GO" id="GO:0042777">
    <property type="term" value="P:proton motive force-driven plasma membrane ATP synthesis"/>
    <property type="evidence" value="ECO:0007669"/>
    <property type="project" value="UniProtKB-UniRule"/>
</dbReference>
<dbReference type="Gene3D" id="3.30.2320.30">
    <property type="entry name" value="ATP synthase, E subunit, C-terminal"/>
    <property type="match status" value="1"/>
</dbReference>
<dbReference type="Gene3D" id="1.20.5.620">
    <property type="entry name" value="F1F0 ATP synthase subunit B, membrane domain"/>
    <property type="match status" value="1"/>
</dbReference>
<dbReference type="HAMAP" id="MF_00311">
    <property type="entry name" value="ATP_synth_E_arch"/>
    <property type="match status" value="1"/>
</dbReference>
<dbReference type="InterPro" id="IPR038495">
    <property type="entry name" value="ATPase_E_C"/>
</dbReference>
<dbReference type="InterPro" id="IPR002842">
    <property type="entry name" value="ATPase_V1_Esu"/>
</dbReference>
<dbReference type="NCBIfam" id="NF002629">
    <property type="entry name" value="PRK02292.1"/>
    <property type="match status" value="1"/>
</dbReference>
<dbReference type="PANTHER" id="PTHR45715">
    <property type="entry name" value="ATPASE H+-TRANSPORTING V1 SUBUNIT E1A-RELATED"/>
    <property type="match status" value="1"/>
</dbReference>
<dbReference type="Pfam" id="PF01991">
    <property type="entry name" value="vATP-synt_E"/>
    <property type="match status" value="1"/>
</dbReference>
<dbReference type="SUPFAM" id="SSF160527">
    <property type="entry name" value="V-type ATPase subunit E-like"/>
    <property type="match status" value="1"/>
</dbReference>
<comment type="function">
    <text evidence="1">Component of the A-type ATP synthase that produces ATP from ADP in the presence of a proton gradient across the membrane.</text>
</comment>
<comment type="subunit">
    <text evidence="1">Has multiple subunits with at least A(3), B(3), C, D, E, F, H, I and proteolipid K(x).</text>
</comment>
<comment type="subcellular location">
    <subcellularLocation>
        <location evidence="1">Cell membrane</location>
        <topology evidence="1">Peripheral membrane protein</topology>
    </subcellularLocation>
</comment>
<comment type="similarity">
    <text evidence="1">Belongs to the V-ATPase E subunit family.</text>
</comment>
<protein>
    <recommendedName>
        <fullName evidence="1">A-type ATP synthase subunit E</fullName>
    </recommendedName>
</protein>
<name>AATE_HALLT</name>
<proteinExistence type="inferred from homology"/>
<gene>
    <name evidence="1" type="primary">atpE</name>
    <name type="ordered locus">Hlac_0278</name>
</gene>
<evidence type="ECO:0000255" key="1">
    <source>
        <dbReference type="HAMAP-Rule" id="MF_00311"/>
    </source>
</evidence>
<reference key="1">
    <citation type="journal article" date="2016" name="Stand. Genomic Sci.">
        <title>Complete genome sequence of the Antarctic Halorubrum lacusprofundi type strain ACAM 34.</title>
        <authorList>
            <person name="Anderson I.J."/>
            <person name="DasSarma P."/>
            <person name="Lucas S."/>
            <person name="Copeland A."/>
            <person name="Lapidus A."/>
            <person name="Del Rio T.G."/>
            <person name="Tice H."/>
            <person name="Dalin E."/>
            <person name="Bruce D.C."/>
            <person name="Goodwin L."/>
            <person name="Pitluck S."/>
            <person name="Sims D."/>
            <person name="Brettin T.S."/>
            <person name="Detter J.C."/>
            <person name="Han C.S."/>
            <person name="Larimer F."/>
            <person name="Hauser L."/>
            <person name="Land M."/>
            <person name="Ivanova N."/>
            <person name="Richardson P."/>
            <person name="Cavicchioli R."/>
            <person name="DasSarma S."/>
            <person name="Woese C.R."/>
            <person name="Kyrpides N.C."/>
        </authorList>
    </citation>
    <scope>NUCLEOTIDE SEQUENCE [LARGE SCALE GENOMIC DNA]</scope>
    <source>
        <strain>ATCC 49239 / DSM 5036 / JCM 8891 / ACAM 34</strain>
    </source>
</reference>